<reference key="1">
    <citation type="journal article" date="2003" name="Proc. Natl. Acad. Sci. U.S.A.">
        <title>Complete genome sequence of the marine planctomycete Pirellula sp. strain 1.</title>
        <authorList>
            <person name="Gloeckner F.O."/>
            <person name="Kube M."/>
            <person name="Bauer M."/>
            <person name="Teeling H."/>
            <person name="Lombardot T."/>
            <person name="Ludwig W."/>
            <person name="Gade D."/>
            <person name="Beck A."/>
            <person name="Borzym K."/>
            <person name="Heitmann K."/>
            <person name="Rabus R."/>
            <person name="Schlesner H."/>
            <person name="Amann R."/>
            <person name="Reinhardt R."/>
        </authorList>
    </citation>
    <scope>NUCLEOTIDE SEQUENCE [LARGE SCALE GENOMIC DNA]</scope>
    <source>
        <strain>DSM 10527 / NCIMB 13988 / SH1</strain>
    </source>
</reference>
<keyword id="KW-1185">Reference proteome</keyword>
<keyword id="KW-0687">Ribonucleoprotein</keyword>
<keyword id="KW-0689">Ribosomal protein</keyword>
<keyword id="KW-0694">RNA-binding</keyword>
<keyword id="KW-0699">rRNA-binding</keyword>
<sequence>MMTDPIADMLTRIRNAVRVERPFVDIPASRVKRGLADVLKREGFIWDWKEEKLEEEPVGYLRLELKYGPNGERVIQSIRRISKPGRRLYSRSKELKPVLGGLGIRIISTSKGVISDREARRDKIGGEVLCEVS</sequence>
<evidence type="ECO:0000255" key="1">
    <source>
        <dbReference type="HAMAP-Rule" id="MF_01302"/>
    </source>
</evidence>
<evidence type="ECO:0000305" key="2"/>
<feature type="chain" id="PRO_0000126472" description="Small ribosomal subunit protein uS8">
    <location>
        <begin position="1"/>
        <end position="133"/>
    </location>
</feature>
<accession>Q7UN06</accession>
<proteinExistence type="inferred from homology"/>
<gene>
    <name evidence="1" type="primary">rpsH</name>
    <name type="ordered locus">RB7855</name>
</gene>
<name>RS8_RHOBA</name>
<protein>
    <recommendedName>
        <fullName evidence="1">Small ribosomal subunit protein uS8</fullName>
    </recommendedName>
    <alternativeName>
        <fullName evidence="2">30S ribosomal protein S8</fullName>
    </alternativeName>
</protein>
<dbReference type="EMBL" id="BX294146">
    <property type="protein sequence ID" value="CAD75613.1"/>
    <property type="molecule type" value="Genomic_DNA"/>
</dbReference>
<dbReference type="RefSeq" id="NP_868066.1">
    <property type="nucleotide sequence ID" value="NC_005027.1"/>
</dbReference>
<dbReference type="RefSeq" id="WP_007326810.1">
    <property type="nucleotide sequence ID" value="NC_005027.1"/>
</dbReference>
<dbReference type="SMR" id="Q7UN06"/>
<dbReference type="FunCoup" id="Q7UN06">
    <property type="interactions" value="518"/>
</dbReference>
<dbReference type="STRING" id="243090.RB7855"/>
<dbReference type="EnsemblBacteria" id="CAD75613">
    <property type="protein sequence ID" value="CAD75613"/>
    <property type="gene ID" value="RB7855"/>
</dbReference>
<dbReference type="GeneID" id="90608451"/>
<dbReference type="KEGG" id="rba:RB7855"/>
<dbReference type="PATRIC" id="fig|243090.15.peg.3797"/>
<dbReference type="eggNOG" id="COG0096">
    <property type="taxonomic scope" value="Bacteria"/>
</dbReference>
<dbReference type="HOGENOM" id="CLU_098428_0_2_0"/>
<dbReference type="InParanoid" id="Q7UN06"/>
<dbReference type="OrthoDB" id="9802617at2"/>
<dbReference type="Proteomes" id="UP000001025">
    <property type="component" value="Chromosome"/>
</dbReference>
<dbReference type="GO" id="GO:0022627">
    <property type="term" value="C:cytosolic small ribosomal subunit"/>
    <property type="evidence" value="ECO:0000318"/>
    <property type="project" value="GO_Central"/>
</dbReference>
<dbReference type="GO" id="GO:0019843">
    <property type="term" value="F:rRNA binding"/>
    <property type="evidence" value="ECO:0007669"/>
    <property type="project" value="UniProtKB-UniRule"/>
</dbReference>
<dbReference type="GO" id="GO:0003735">
    <property type="term" value="F:structural constituent of ribosome"/>
    <property type="evidence" value="ECO:0000318"/>
    <property type="project" value="GO_Central"/>
</dbReference>
<dbReference type="GO" id="GO:0006412">
    <property type="term" value="P:translation"/>
    <property type="evidence" value="ECO:0007669"/>
    <property type="project" value="UniProtKB-UniRule"/>
</dbReference>
<dbReference type="FunFam" id="3.30.1370.30:FF:000002">
    <property type="entry name" value="30S ribosomal protein S8"/>
    <property type="match status" value="1"/>
</dbReference>
<dbReference type="FunFam" id="3.30.1490.10:FF:000001">
    <property type="entry name" value="30S ribosomal protein S8"/>
    <property type="match status" value="1"/>
</dbReference>
<dbReference type="Gene3D" id="3.30.1370.30">
    <property type="match status" value="1"/>
</dbReference>
<dbReference type="Gene3D" id="3.30.1490.10">
    <property type="match status" value="1"/>
</dbReference>
<dbReference type="HAMAP" id="MF_01302_B">
    <property type="entry name" value="Ribosomal_uS8_B"/>
    <property type="match status" value="1"/>
</dbReference>
<dbReference type="InterPro" id="IPR000630">
    <property type="entry name" value="Ribosomal_uS8"/>
</dbReference>
<dbReference type="InterPro" id="IPR047863">
    <property type="entry name" value="Ribosomal_uS8_CS"/>
</dbReference>
<dbReference type="InterPro" id="IPR035987">
    <property type="entry name" value="Ribosomal_uS8_sf"/>
</dbReference>
<dbReference type="NCBIfam" id="NF001109">
    <property type="entry name" value="PRK00136.1"/>
    <property type="match status" value="1"/>
</dbReference>
<dbReference type="PANTHER" id="PTHR11758">
    <property type="entry name" value="40S RIBOSOMAL PROTEIN S15A"/>
    <property type="match status" value="1"/>
</dbReference>
<dbReference type="Pfam" id="PF00410">
    <property type="entry name" value="Ribosomal_S8"/>
    <property type="match status" value="1"/>
</dbReference>
<dbReference type="SUPFAM" id="SSF56047">
    <property type="entry name" value="Ribosomal protein S8"/>
    <property type="match status" value="1"/>
</dbReference>
<dbReference type="PROSITE" id="PS00053">
    <property type="entry name" value="RIBOSOMAL_S8"/>
    <property type="match status" value="1"/>
</dbReference>
<organism>
    <name type="scientific">Rhodopirellula baltica (strain DSM 10527 / NCIMB 13988 / SH1)</name>
    <dbReference type="NCBI Taxonomy" id="243090"/>
    <lineage>
        <taxon>Bacteria</taxon>
        <taxon>Pseudomonadati</taxon>
        <taxon>Planctomycetota</taxon>
        <taxon>Planctomycetia</taxon>
        <taxon>Pirellulales</taxon>
        <taxon>Pirellulaceae</taxon>
        <taxon>Rhodopirellula</taxon>
    </lineage>
</organism>
<comment type="function">
    <text evidence="1">One of the primary rRNA binding proteins, it binds directly to 16S rRNA central domain where it helps coordinate assembly of the platform of the 30S subunit.</text>
</comment>
<comment type="subunit">
    <text evidence="1">Part of the 30S ribosomal subunit. Contacts proteins S5 and S12.</text>
</comment>
<comment type="similarity">
    <text evidence="1">Belongs to the universal ribosomal protein uS8 family.</text>
</comment>